<dbReference type="EMBL" id="M32792">
    <property type="protein sequence ID" value="AAA49410.1"/>
    <property type="molecule type" value="mRNA"/>
</dbReference>
<dbReference type="EMBL" id="AF063216">
    <property type="protein sequence ID" value="AAC18833.1"/>
    <property type="molecule type" value="Genomic_DNA"/>
</dbReference>
<dbReference type="EMBL" id="M81911">
    <property type="protein sequence ID" value="AAB59947.1"/>
    <property type="molecule type" value="mRNA"/>
</dbReference>
<dbReference type="EMBL" id="M81912">
    <property type="protein sequence ID" value="AAB59948.1"/>
    <property type="molecule type" value="mRNA"/>
</dbReference>
<dbReference type="EMBL" id="M81913">
    <property type="protein sequence ID" value="AAA49413.1"/>
    <property type="molecule type" value="mRNA"/>
</dbReference>
<dbReference type="EMBL" id="M81904">
    <property type="protein sequence ID" value="AAA18211.1"/>
    <property type="molecule type" value="mRNA"/>
</dbReference>
<dbReference type="PIR" id="A41396">
    <property type="entry name" value="A41396"/>
</dbReference>
<dbReference type="PIR" id="C44012">
    <property type="entry name" value="C44012"/>
</dbReference>
<dbReference type="SMR" id="P17085"/>
<dbReference type="Proteomes" id="UP000694557">
    <property type="component" value="Unplaced"/>
</dbReference>
<dbReference type="GO" id="GO:0005615">
    <property type="term" value="C:extracellular space"/>
    <property type="evidence" value="ECO:0007669"/>
    <property type="project" value="InterPro"/>
</dbReference>
<dbReference type="GO" id="GO:0008083">
    <property type="term" value="F:growth factor activity"/>
    <property type="evidence" value="ECO:0007669"/>
    <property type="project" value="UniProtKB-KW"/>
</dbReference>
<dbReference type="GO" id="GO:0005179">
    <property type="term" value="F:hormone activity"/>
    <property type="evidence" value="ECO:0007669"/>
    <property type="project" value="InterPro"/>
</dbReference>
<dbReference type="GO" id="GO:0005159">
    <property type="term" value="F:insulin-like growth factor receptor binding"/>
    <property type="evidence" value="ECO:0007669"/>
    <property type="project" value="TreeGrafter"/>
</dbReference>
<dbReference type="GO" id="GO:0008283">
    <property type="term" value="P:cell population proliferation"/>
    <property type="evidence" value="ECO:0007669"/>
    <property type="project" value="TreeGrafter"/>
</dbReference>
<dbReference type="GO" id="GO:0048009">
    <property type="term" value="P:insulin-like growth factor receptor signaling pathway"/>
    <property type="evidence" value="ECO:0007669"/>
    <property type="project" value="TreeGrafter"/>
</dbReference>
<dbReference type="GO" id="GO:0043066">
    <property type="term" value="P:negative regulation of apoptotic process"/>
    <property type="evidence" value="ECO:0000250"/>
    <property type="project" value="UniProtKB"/>
</dbReference>
<dbReference type="GO" id="GO:0090201">
    <property type="term" value="P:negative regulation of release of cytochrome c from mitochondria"/>
    <property type="evidence" value="ECO:0000250"/>
    <property type="project" value="UniProtKB"/>
</dbReference>
<dbReference type="GO" id="GO:0008284">
    <property type="term" value="P:positive regulation of cell population proliferation"/>
    <property type="evidence" value="ECO:0007669"/>
    <property type="project" value="TreeGrafter"/>
</dbReference>
<dbReference type="GO" id="GO:0051897">
    <property type="term" value="P:positive regulation of phosphatidylinositol 3-kinase/protein kinase B signal transduction"/>
    <property type="evidence" value="ECO:0007669"/>
    <property type="project" value="TreeGrafter"/>
</dbReference>
<dbReference type="CDD" id="cd04368">
    <property type="entry name" value="IlGF"/>
    <property type="match status" value="1"/>
</dbReference>
<dbReference type="FunFam" id="1.10.100.10:FF:000001">
    <property type="entry name" value="insulin-like growth factor I isoform X1"/>
    <property type="match status" value="1"/>
</dbReference>
<dbReference type="Gene3D" id="1.10.100.10">
    <property type="entry name" value="Insulin-like"/>
    <property type="match status" value="1"/>
</dbReference>
<dbReference type="InterPro" id="IPR022341">
    <property type="entry name" value="IGF-I"/>
</dbReference>
<dbReference type="InterPro" id="IPR016179">
    <property type="entry name" value="Insulin-like"/>
</dbReference>
<dbReference type="InterPro" id="IPR022350">
    <property type="entry name" value="Insulin-like_growth_factor"/>
</dbReference>
<dbReference type="InterPro" id="IPR036438">
    <property type="entry name" value="Insulin-like_sf"/>
</dbReference>
<dbReference type="InterPro" id="IPR022353">
    <property type="entry name" value="Insulin_CS"/>
</dbReference>
<dbReference type="InterPro" id="IPR022352">
    <property type="entry name" value="Insulin_family"/>
</dbReference>
<dbReference type="PANTHER" id="PTHR46845:SF3">
    <property type="entry name" value="INSULIN-LIKE GROWTH FACTOR 1"/>
    <property type="match status" value="1"/>
</dbReference>
<dbReference type="PANTHER" id="PTHR46845">
    <property type="entry name" value="INSULIN-LIKE GROWTH FACTOR I"/>
    <property type="match status" value="1"/>
</dbReference>
<dbReference type="Pfam" id="PF00049">
    <property type="entry name" value="Insulin"/>
    <property type="match status" value="1"/>
</dbReference>
<dbReference type="PRINTS" id="PR02002">
    <property type="entry name" value="INSLNLIKEGF"/>
</dbReference>
<dbReference type="PRINTS" id="PR02005">
    <property type="entry name" value="INSLNLIKEGF1"/>
</dbReference>
<dbReference type="PRINTS" id="PR00276">
    <property type="entry name" value="INSULINFAMLY"/>
</dbReference>
<dbReference type="SMART" id="SM00078">
    <property type="entry name" value="IlGF"/>
    <property type="match status" value="1"/>
</dbReference>
<dbReference type="SUPFAM" id="SSF56994">
    <property type="entry name" value="Insulin-like"/>
    <property type="match status" value="1"/>
</dbReference>
<dbReference type="PROSITE" id="PS00262">
    <property type="entry name" value="INSULIN"/>
    <property type="match status" value="1"/>
</dbReference>
<organism>
    <name type="scientific">Oncorhynchus kisutch</name>
    <name type="common">Coho salmon</name>
    <name type="synonym">Salmo kisutch</name>
    <dbReference type="NCBI Taxonomy" id="8019"/>
    <lineage>
        <taxon>Eukaryota</taxon>
        <taxon>Metazoa</taxon>
        <taxon>Chordata</taxon>
        <taxon>Craniata</taxon>
        <taxon>Vertebrata</taxon>
        <taxon>Euteleostomi</taxon>
        <taxon>Actinopterygii</taxon>
        <taxon>Neopterygii</taxon>
        <taxon>Teleostei</taxon>
        <taxon>Protacanthopterygii</taxon>
        <taxon>Salmoniformes</taxon>
        <taxon>Salmonidae</taxon>
        <taxon>Salmoninae</taxon>
        <taxon>Oncorhynchus</taxon>
    </lineage>
</organism>
<keyword id="KW-0025">Alternative splicing</keyword>
<keyword id="KW-0903">Direct protein sequencing</keyword>
<keyword id="KW-1015">Disulfide bond</keyword>
<keyword id="KW-0339">Growth factor</keyword>
<keyword id="KW-1185">Reference proteome</keyword>
<keyword id="KW-0964">Secreted</keyword>
<keyword id="KW-0732">Signal</keyword>
<reference key="1">
    <citation type="journal article" date="1989" name="Mol. Endocrinol.">
        <title>Nucleotide sequence and growth hormone-regulated expression of salmon insulin-like growth factor I mRNA.</title>
        <authorList>
            <person name="Cao Q.-P."/>
            <person name="Duguay S.J."/>
            <person name="Plisetskaya E.M."/>
            <person name="Steiner D.F."/>
            <person name="Chan S.J."/>
        </authorList>
    </citation>
    <scope>NUCLEOTIDE SEQUENCE (ISOFORM 2)</scope>
    <source>
        <tissue>Liver</tissue>
    </source>
</reference>
<reference key="2">
    <citation type="journal article" date="1994" name="DNA Cell Biol.">
        <title>Isolation of a second nonallelic insulin-like growth factor I gene from the salmon genome.</title>
        <authorList>
            <person name="Kavsan V.M."/>
            <person name="Grebenjuk V.A."/>
            <person name="Koval A.P."/>
            <person name="Skorokhod A.S."/>
            <person name="Roberts C.T. Jr."/>
            <person name="Leroith D."/>
        </authorList>
    </citation>
    <scope>NUCLEOTIDE SEQUENCE (ISOFORM 3)</scope>
</reference>
<reference key="3">
    <citation type="submission" date="1998-05" db="EMBL/GenBank/DDBJ databases">
        <authorList>
            <person name="Grebenjuk V.A."/>
            <person name="Skorokhod A.S."/>
            <person name="Anoprienko O.V."/>
            <person name="Koval A.P."/>
        </authorList>
    </citation>
    <scope>NUCLEOTIDE SEQUENCE (ISOFORM 3)</scope>
</reference>
<reference key="4">
    <citation type="journal article" date="1992" name="Mol. Endocrinol.">
        <title>Nucleotide sequence and tissue distribution of three insulin-like growth factor I prohormones in salmon.</title>
        <authorList>
            <person name="Duguay S.J."/>
            <person name="Park L.K."/>
            <person name="Samadpour M."/>
            <person name="Dickhoff W.W."/>
        </authorList>
    </citation>
    <scope>NUCLEOTIDE SEQUENCE OF 27-169 (ISOFORMS 1; 2 AND 3)</scope>
    <source>
        <tissue>Liver</tissue>
    </source>
</reference>
<reference key="5">
    <citation type="journal article" date="1993" name="Eur. J. Biochem.">
        <title>Recombinant coho salmon insulin-like growth factor I. Expression in Escherichia coli, purification and characterization.</title>
        <authorList>
            <person name="Moriyama S."/>
            <person name="Duguay S.J."/>
            <person name="Conlon J.M."/>
            <person name="Duan C."/>
            <person name="Dickhoff W.W."/>
            <person name="Plisetskaya E.M."/>
        </authorList>
    </citation>
    <scope>PROTEIN SEQUENCE OF 45-114</scope>
</reference>
<accession>P17085</accession>
<accession>P81268</accession>
<accession>Q6LDG9</accession>
<accession>Q91161</accession>
<accession>Q91162</accession>
<accession>Q91475</accession>
<gene>
    <name evidence="2" type="primary">igf1</name>
    <name evidence="2" type="synonym">igf-1</name>
</gene>
<feature type="signal peptide">
    <location>
        <begin position="1"/>
        <end status="unknown"/>
    </location>
</feature>
<feature type="propeptide" id="PRO_0000015702" evidence="4">
    <location>
        <begin status="unknown"/>
        <end position="44"/>
    </location>
</feature>
<feature type="chain" id="PRO_0000015703" description="Insulin-like growth factor 1">
    <location>
        <begin position="45"/>
        <end position="114"/>
    </location>
</feature>
<feature type="propeptide" id="PRO_0000015704" description="E peptide">
    <location>
        <begin position="115"/>
        <end position="188"/>
    </location>
</feature>
<feature type="region of interest" description="B">
    <location>
        <begin position="45"/>
        <end position="73"/>
    </location>
</feature>
<feature type="region of interest" description="C">
    <location>
        <begin position="74"/>
        <end position="85"/>
    </location>
</feature>
<feature type="region of interest" description="A">
    <location>
        <begin position="86"/>
        <end position="106"/>
    </location>
</feature>
<feature type="region of interest" description="D">
    <location>
        <begin position="107"/>
        <end position="114"/>
    </location>
</feature>
<feature type="region of interest" description="Disordered" evidence="3">
    <location>
        <begin position="115"/>
        <end position="188"/>
    </location>
</feature>
<feature type="compositionally biased region" description="Basic and acidic residues" evidence="3">
    <location>
        <begin position="140"/>
        <end position="153"/>
    </location>
</feature>
<feature type="disulfide bond" evidence="1">
    <location>
        <begin position="50"/>
        <end position="92"/>
    </location>
</feature>
<feature type="disulfide bond" evidence="1">
    <location>
        <begin position="62"/>
        <end position="105"/>
    </location>
</feature>
<feature type="disulfide bond" evidence="1">
    <location>
        <begin position="91"/>
        <end position="96"/>
    </location>
</feature>
<feature type="splice variant" id="VSP_010979" description="In isoform 1." evidence="6">
    <location>
        <begin position="131"/>
        <end position="169"/>
    </location>
</feature>
<feature type="splice variant" id="VSP_010980" description="In isoform 2." evidence="6">
    <location>
        <begin position="158"/>
        <end position="169"/>
    </location>
</feature>
<feature type="sequence conflict" description="In Ref. 2 and 3." evidence="6" ref="2 3">
    <original>L</original>
    <variation>F</variation>
    <location>
        <position position="6"/>
    </location>
</feature>
<feature type="sequence conflict" description="In Ref. 2 and 3." evidence="6" ref="2 3">
    <original>I</original>
    <variation>V</variation>
    <location>
        <position position="22"/>
    </location>
</feature>
<feature type="sequence conflict" description="In Ref. 2 and 3." evidence="6" ref="2 3">
    <original>V</original>
    <variation>I</variation>
    <location>
        <position position="131"/>
    </location>
</feature>
<feature type="sequence conflict" description="In Ref. 4; AAA18211." evidence="6" ref="4">
    <original>P</original>
    <variation>T</variation>
    <location>
        <position position="155"/>
    </location>
</feature>
<feature type="sequence conflict" description="In Ref. 4; AAA18211." evidence="6" ref="4">
    <original>N</original>
    <variation>H</variation>
    <location>
        <position position="163"/>
    </location>
</feature>
<evidence type="ECO:0000250" key="1"/>
<evidence type="ECO:0000250" key="2">
    <source>
        <dbReference type="UniProtKB" id="P05019"/>
    </source>
</evidence>
<evidence type="ECO:0000256" key="3">
    <source>
        <dbReference type="SAM" id="MobiDB-lite"/>
    </source>
</evidence>
<evidence type="ECO:0000269" key="4">
    <source>
    </source>
</evidence>
<evidence type="ECO:0000303" key="5">
    <source>
    </source>
</evidence>
<evidence type="ECO:0000305" key="6"/>
<protein>
    <recommendedName>
        <fullName evidence="2">Insulin-like growth factor 1</fullName>
    </recommendedName>
    <alternativeName>
        <fullName evidence="5">Insulin-like growth factor I</fullName>
        <shortName evidence="5">IGF-I</shortName>
    </alternativeName>
    <alternativeName>
        <fullName>Somatomedin</fullName>
    </alternativeName>
</protein>
<proteinExistence type="evidence at protein level"/>
<sequence>MSSGHLFQWHLCDVFKSAMCCISCTHTLSLLLCVLTLTSAATGAGPETLCGAELVDTLQFVCGERGFYFSKPTGYGPSSRRSHNRGIVDECCFQSCELRRLEMYCAPVKSGKAARSVRAQRHTDMPRTPKVSTAVQNVDRGTERRTAQHPDKTKPKKKPLSGNSHTSCKEVHQKNSSRGNTGGRNYRM</sequence>
<comment type="function">
    <text evidence="2">The insulin-like growth factors, isolated from plasma, are structurally and functionally related to insulin but have a much higher growth-promoting activity. Acts as a ligand for IGF1R. Binds to the alpha subunit of IGF1R, leading to the activation of the intrinsic tyrosine kinase activity which autophosphorylates tyrosine residues in the beta subunit thus initiatiating a cascade of down-stream signaling events leading to activation of the PI3K-AKT/PKB and the Ras-MAPK pathways. Binds to integrins. Its binding to integrins and subsequent ternary complex formation with integrins and IGFR1 are essential for IGF1 signaling.</text>
</comment>
<comment type="subcellular location">
    <subcellularLocation>
        <location>Secreted</location>
    </subcellularLocation>
</comment>
<comment type="alternative products">
    <event type="alternative splicing"/>
    <isoform>
        <id>P17085-1</id>
        <name>3</name>
        <name>Ea-3</name>
        <sequence type="displayed"/>
    </isoform>
    <isoform>
        <id>P17085-2</id>
        <name>1</name>
        <name>Ea-1</name>
        <sequence type="described" ref="VSP_010979"/>
    </isoform>
    <isoform>
        <id>P17085-3</id>
        <name>2</name>
        <name>Ea-2</name>
        <sequence type="described" ref="VSP_010980"/>
    </isoform>
</comment>
<comment type="tissue specificity">
    <text>All the isoforms are expressed in embryos, juvenile and adult liver, muscle and brain. At least one isoform is expressed in heart, kidney, testes, ovary, adipose tissue and spleen of juvenile salmon.</text>
</comment>
<comment type="similarity">
    <text evidence="6">Belongs to the insulin family.</text>
</comment>
<name>IGF1_ONCKI</name>